<organism>
    <name type="scientific">Rattus norvegicus</name>
    <name type="common">Rat</name>
    <dbReference type="NCBI Taxonomy" id="10116"/>
    <lineage>
        <taxon>Eukaryota</taxon>
        <taxon>Metazoa</taxon>
        <taxon>Chordata</taxon>
        <taxon>Craniata</taxon>
        <taxon>Vertebrata</taxon>
        <taxon>Euteleostomi</taxon>
        <taxon>Mammalia</taxon>
        <taxon>Eutheria</taxon>
        <taxon>Euarchontoglires</taxon>
        <taxon>Glires</taxon>
        <taxon>Rodentia</taxon>
        <taxon>Myomorpha</taxon>
        <taxon>Muroidea</taxon>
        <taxon>Muridae</taxon>
        <taxon>Murinae</taxon>
        <taxon>Rattus</taxon>
    </lineage>
</organism>
<protein>
    <recommendedName>
        <fullName>Metastasis-suppressor KiSS-1</fullName>
    </recommendedName>
    <alternativeName>
        <fullName>Kisspeptin-1</fullName>
    </alternativeName>
    <component>
        <recommendedName>
            <fullName>Metastin</fullName>
        </recommendedName>
    </component>
    <component>
        <recommendedName>
            <fullName>Kisspeptin-10</fullName>
        </recommendedName>
        <alternativeName>
            <fullName>Metastin45-54</fullName>
        </alternativeName>
    </component>
</protein>
<dbReference type="EMBL" id="AY196983">
    <property type="protein sequence ID" value="AAP22375.1"/>
    <property type="molecule type" value="mRNA"/>
</dbReference>
<dbReference type="RefSeq" id="NP_001399554.1">
    <property type="nucleotide sequence ID" value="NM_001412625.1"/>
</dbReference>
<dbReference type="RefSeq" id="NP_859043.1">
    <property type="nucleotide sequence ID" value="NM_181692.2"/>
</dbReference>
<dbReference type="RefSeq" id="XP_008767665.1">
    <property type="nucleotide sequence ID" value="XM_008769443.2"/>
</dbReference>
<dbReference type="RefSeq" id="XP_017454186.1">
    <property type="nucleotide sequence ID" value="XM_017598697.1"/>
</dbReference>
<dbReference type="BioGRID" id="252772">
    <property type="interactions" value="1"/>
</dbReference>
<dbReference type="FunCoup" id="Q7TSB7">
    <property type="interactions" value="57"/>
</dbReference>
<dbReference type="STRING" id="10116.ENSRNOP00000068332"/>
<dbReference type="PhosphoSitePlus" id="Q7TSB7"/>
<dbReference type="PaxDb" id="10116-ENSRNOP00000068332"/>
<dbReference type="Ensembl" id="ENSRNOT00000076506.2">
    <property type="protein sequence ID" value="ENSRNOP00000068332.1"/>
    <property type="gene ID" value="ENSRNOG00000047481.4"/>
</dbReference>
<dbReference type="GeneID" id="289023"/>
<dbReference type="KEGG" id="rno:289023"/>
<dbReference type="UCSC" id="RGD:727850">
    <property type="organism name" value="rat"/>
</dbReference>
<dbReference type="AGR" id="RGD:727850"/>
<dbReference type="CTD" id="3814"/>
<dbReference type="RGD" id="727850">
    <property type="gene designation" value="Kiss1"/>
</dbReference>
<dbReference type="eggNOG" id="ENOG502SFM2">
    <property type="taxonomic scope" value="Eukaryota"/>
</dbReference>
<dbReference type="GeneTree" id="ENSGT00390000008827"/>
<dbReference type="HOGENOM" id="CLU_119112_0_0_1"/>
<dbReference type="InParanoid" id="Q7TSB7"/>
<dbReference type="OMA" id="LAHLIPW"/>
<dbReference type="OrthoDB" id="9899812at2759"/>
<dbReference type="Reactome" id="R-RNO-375276">
    <property type="pathway name" value="Peptide ligand-binding receptors"/>
</dbReference>
<dbReference type="Reactome" id="R-RNO-416476">
    <property type="pathway name" value="G alpha (q) signalling events"/>
</dbReference>
<dbReference type="PRO" id="PR:Q7TSB7"/>
<dbReference type="Proteomes" id="UP000002494">
    <property type="component" value="Chromosome 13"/>
</dbReference>
<dbReference type="Bgee" id="ENSRNOG00000047481">
    <property type="expression patterns" value="Expressed in pancreas and 11 other cell types or tissues"/>
</dbReference>
<dbReference type="ExpressionAtlas" id="Q7TSB7">
    <property type="expression patterns" value="baseline and differential"/>
</dbReference>
<dbReference type="GO" id="GO:0016324">
    <property type="term" value="C:apical plasma membrane"/>
    <property type="evidence" value="ECO:0000314"/>
    <property type="project" value="RGD"/>
</dbReference>
<dbReference type="GO" id="GO:0005615">
    <property type="term" value="C:extracellular space"/>
    <property type="evidence" value="ECO:0000314"/>
    <property type="project" value="RGD"/>
</dbReference>
<dbReference type="GO" id="GO:0043025">
    <property type="term" value="C:neuronal cell body"/>
    <property type="evidence" value="ECO:0000314"/>
    <property type="project" value="RGD"/>
</dbReference>
<dbReference type="GO" id="GO:0001664">
    <property type="term" value="F:G protein-coupled receptor binding"/>
    <property type="evidence" value="ECO:0000304"/>
    <property type="project" value="RGD"/>
</dbReference>
<dbReference type="GO" id="GO:0031773">
    <property type="term" value="F:kisspeptin receptor binding"/>
    <property type="evidence" value="ECO:0000353"/>
    <property type="project" value="RGD"/>
</dbReference>
<dbReference type="GO" id="GO:0046697">
    <property type="term" value="P:decidualization"/>
    <property type="evidence" value="ECO:0000266"/>
    <property type="project" value="RGD"/>
</dbReference>
<dbReference type="GO" id="GO:0007186">
    <property type="term" value="P:G protein-coupled receptor signaling pathway"/>
    <property type="evidence" value="ECO:0000266"/>
    <property type="project" value="RGD"/>
</dbReference>
<dbReference type="GO" id="GO:0060112">
    <property type="term" value="P:generation of ovulation cycle rhythm"/>
    <property type="evidence" value="ECO:0000315"/>
    <property type="project" value="RGD"/>
</dbReference>
<dbReference type="GO" id="GO:0030336">
    <property type="term" value="P:negative regulation of cell migration"/>
    <property type="evidence" value="ECO:0000266"/>
    <property type="project" value="RGD"/>
</dbReference>
<dbReference type="GO" id="GO:0008285">
    <property type="term" value="P:negative regulation of cell population proliferation"/>
    <property type="evidence" value="ECO:0000314"/>
    <property type="project" value="RGD"/>
</dbReference>
<dbReference type="GO" id="GO:0007200">
    <property type="term" value="P:phospholipase C-activating G protein-coupled receptor signaling pathway"/>
    <property type="evidence" value="ECO:0000314"/>
    <property type="project" value="RGD"/>
</dbReference>
<dbReference type="GO" id="GO:0007204">
    <property type="term" value="P:positive regulation of cytosolic calcium ion concentration"/>
    <property type="evidence" value="ECO:0000314"/>
    <property type="project" value="RGD"/>
</dbReference>
<dbReference type="GO" id="GO:0060124">
    <property type="term" value="P:positive regulation of growth hormone secretion"/>
    <property type="evidence" value="ECO:0000314"/>
    <property type="project" value="RGD"/>
</dbReference>
<dbReference type="GO" id="GO:0033686">
    <property type="term" value="P:positive regulation of luteinizing hormone secretion"/>
    <property type="evidence" value="ECO:0000314"/>
    <property type="project" value="RGD"/>
</dbReference>
<dbReference type="GO" id="GO:0043410">
    <property type="term" value="P:positive regulation of MAPK cascade"/>
    <property type="evidence" value="ECO:0000315"/>
    <property type="project" value="RGD"/>
</dbReference>
<dbReference type="GO" id="GO:0050806">
    <property type="term" value="P:positive regulation of synaptic transmission"/>
    <property type="evidence" value="ECO:0000314"/>
    <property type="project" value="RGD"/>
</dbReference>
<dbReference type="InterPro" id="IPR020207">
    <property type="entry name" value="Metastasis-suppressor_KiSS-1"/>
</dbReference>
<dbReference type="PANTHER" id="PTHR16955">
    <property type="entry name" value="METASTASIS-SUPPRESSOR KISS-1"/>
    <property type="match status" value="1"/>
</dbReference>
<dbReference type="PANTHER" id="PTHR16955:SF6">
    <property type="entry name" value="METASTASIS-SUPPRESSOR KISS-1"/>
    <property type="match status" value="1"/>
</dbReference>
<dbReference type="Pfam" id="PF15152">
    <property type="entry name" value="Kisspeptin"/>
    <property type="match status" value="1"/>
</dbReference>
<keyword id="KW-0027">Amidation</keyword>
<keyword id="KW-0165">Cleavage on pair of basic residues</keyword>
<keyword id="KW-1015">Disulfide bond</keyword>
<keyword id="KW-0597">Phosphoprotein</keyword>
<keyword id="KW-1185">Reference proteome</keyword>
<keyword id="KW-0964">Secreted</keyword>
<keyword id="KW-0732">Signal</keyword>
<sequence>MISLASWQLLLLLCVASFGEPLAKMAPVVNPEPTGQQSGPQELVNAWQKGPRYAESKPGAAGLRARRTSPCPPVENPTGHQRPPCATRSRLIPAPRGSVLVQREKDMSAYNWNSFGLRYGRRQVARAARG</sequence>
<reference key="1">
    <citation type="journal article" date="2004" name="Biochim. Biophys. Acta">
        <title>Expression of KiSS-1, a metastasis suppressor gene, in trophoblast giant cells of the rat placenta.</title>
        <authorList>
            <person name="Terao Y."/>
            <person name="Kumano S."/>
            <person name="Takatsu Y."/>
            <person name="Hattori M."/>
            <person name="Nishimura A."/>
            <person name="Ohtaki T."/>
            <person name="Shintani Y."/>
        </authorList>
    </citation>
    <scope>NUCLEOTIDE SEQUENCE [MRNA]</scope>
    <scope>TISSUE SPECIFICITY</scope>
    <scope>DEVELOPMENTAL STAGE</scope>
    <source>
        <strain>Wistar</strain>
        <tissue>Liver</tissue>
        <tissue>Placenta</tissue>
    </source>
</reference>
<reference key="2">
    <citation type="journal article" date="2004" name="Biochem. Biophys. Res. Commun.">
        <title>Peripheral administration of metastin induces marked gonadotropin release and ovulation in the rat.</title>
        <authorList>
            <person name="Matsui H."/>
            <person name="Takatsu Y."/>
            <person name="Kumano S."/>
            <person name="Matsumoto H."/>
            <person name="Ohtaki T."/>
        </authorList>
    </citation>
    <scope>POSSIBLE ROLE IN GONADOPTROPIN RELEASE</scope>
</reference>
<reference key="3">
    <citation type="journal article" date="2004" name="Endocrinology">
        <title>Developmental and hormonally regulated messenger ribonucleic acid expression of KiSS-1 and its putative receptor, GPR54, in rat hypothalamus and potent luteinizing hormone-releasing activity of KiSS-1 peptide.</title>
        <authorList>
            <person name="Navarro V.M."/>
            <person name="Castellano J.M."/>
            <person name="Fernandez-Fernandez R."/>
            <person name="Barreiro M.L."/>
            <person name="Roa J."/>
            <person name="Sanchez-Criado J.E."/>
            <person name="Aguilar E."/>
            <person name="Dieguez C."/>
            <person name="Pinilla L."/>
            <person name="Tena-Sempere M."/>
        </authorList>
    </citation>
    <scope>TISSUE SPECIFICITY</scope>
    <scope>FUNCTION</scope>
</reference>
<reference key="4">
    <citation type="journal article" date="2005" name="J. Comp. Neurol.">
        <title>KiSS-1 expression and metastin-like immunoreactivity in the rat brain.</title>
        <authorList>
            <person name="Brailoiu G.C."/>
            <person name="Dun S.L."/>
            <person name="Ohsawa M."/>
            <person name="Yin D."/>
            <person name="Yang J."/>
            <person name="Chang J.K."/>
            <person name="Brailoiu E."/>
            <person name="Dun N.J."/>
        </authorList>
    </citation>
    <scope>TISSUE SPECIFICITY</scope>
    <scope>FUNCTION</scope>
</reference>
<proteinExistence type="evidence at transcript level"/>
<comment type="function">
    <text evidence="6 7">Metastasis suppressor protein. May regulate events downstream of cell-matrix adhesion, perhaps involving cytoskeletal reorganization. Generates a C-terminally amidated peptide, metastin which functions as the endogenous ligand of the G-protein coupled receptor GPR54. The receptor is also essential for normal gonadotropin-released hormone physiology and for puberty. The hypothalamic KiSS1/GPR54 system is a pivotal factor in central regulation of the gonadotropic axis at puberty and in adulthood. Intracerebroventricular administration induces an increase in serum LH and FSH levels in prepubertal male and female as well as in adult animals.</text>
</comment>
<comment type="subcellular location">
    <subcellularLocation>
        <location>Secreted</location>
    </subcellularLocation>
</comment>
<comment type="tissue specificity">
    <text evidence="5 6 7">Highest levels in the cecum and colon. Moderate levels present in the liver, spleen, kidney, ovary, uterus and small intestine. Low levels in the stomach, pancreas and placenta. Expressed only moderately in the placenta. Persistent expression is detected in hypothalamus throughout postnatal development, with maximum expression levels at puberty in both male and female. Hypothalamic expression is sensitive to neonatal imprinting by estrogen. Expression is higher in the hypothalamus than in the brainstem and spinal cord. In the brain, metastin-like immunoreactivity is found mainly in three groups of cells: dorsomedial hypothalamic nucleus, nucleus of the solitary tract, and caudal ventrolateral medulla.</text>
</comment>
<comment type="developmental stage">
    <text evidence="5">Expression observed in trophoblast giant cells (TGCs), the placenta-derived cell lineage aligned at the boundary between the uterus and placenta, at 12.5 dpc. Expressions gradually decreased during placental maturation, and the signal is no more detectable in the cells at 18.5 dpc.</text>
</comment>
<comment type="similarity">
    <text evidence="8">Belongs to the KISS1 family.</text>
</comment>
<feature type="signal peptide" evidence="3">
    <location>
        <begin position="1"/>
        <end position="19"/>
    </location>
</feature>
<feature type="chain" id="PRO_0000021555" description="Metastasis-suppressor KiSS-1">
    <location>
        <begin position="20"/>
        <end position="130"/>
    </location>
</feature>
<feature type="peptide" id="PRO_0000021556" description="Metastin">
    <location>
        <begin position="68"/>
        <end position="119"/>
    </location>
</feature>
<feature type="peptide" id="PRO_0000021557" description="Kisspeptin-10">
    <location>
        <begin position="110"/>
        <end position="119"/>
    </location>
</feature>
<feature type="region of interest" description="Disordered" evidence="4">
    <location>
        <begin position="52"/>
        <end position="91"/>
    </location>
</feature>
<feature type="region of interest" description="Essential for receptor binding and receptor activation">
    <location>
        <begin position="110"/>
        <end position="119"/>
    </location>
</feature>
<feature type="modified residue" description="Phosphotyrosine" evidence="2">
    <location>
        <position position="110"/>
    </location>
</feature>
<feature type="modified residue" description="Tyrosine amide" evidence="1">
    <location>
        <position position="119"/>
    </location>
</feature>
<feature type="disulfide bond" evidence="3">
    <location>
        <begin position="71"/>
        <end position="85"/>
    </location>
</feature>
<gene>
    <name type="primary">Kiss1</name>
</gene>
<name>KISS1_RAT</name>
<evidence type="ECO:0000250" key="1"/>
<evidence type="ECO:0000250" key="2">
    <source>
        <dbReference type="UniProtKB" id="Q15726"/>
    </source>
</evidence>
<evidence type="ECO:0000255" key="3"/>
<evidence type="ECO:0000256" key="4">
    <source>
        <dbReference type="SAM" id="MobiDB-lite"/>
    </source>
</evidence>
<evidence type="ECO:0000269" key="5">
    <source>
    </source>
</evidence>
<evidence type="ECO:0000269" key="6">
    <source>
    </source>
</evidence>
<evidence type="ECO:0000269" key="7">
    <source>
    </source>
</evidence>
<evidence type="ECO:0000305" key="8"/>
<accession>Q7TSB7</accession>